<organism>
    <name type="scientific">Pseudomonas putida (strain GB-1)</name>
    <dbReference type="NCBI Taxonomy" id="76869"/>
    <lineage>
        <taxon>Bacteria</taxon>
        <taxon>Pseudomonadati</taxon>
        <taxon>Pseudomonadota</taxon>
        <taxon>Gammaproteobacteria</taxon>
        <taxon>Pseudomonadales</taxon>
        <taxon>Pseudomonadaceae</taxon>
        <taxon>Pseudomonas</taxon>
    </lineage>
</organism>
<feature type="chain" id="PRO_1000082529" description="tRNA (guanine-N(1)-)-methyltransferase">
    <location>
        <begin position="1"/>
        <end position="250"/>
    </location>
</feature>
<feature type="binding site" evidence="1">
    <location>
        <position position="116"/>
    </location>
    <ligand>
        <name>S-adenosyl-L-methionine</name>
        <dbReference type="ChEBI" id="CHEBI:59789"/>
    </ligand>
</feature>
<feature type="binding site" evidence="1">
    <location>
        <begin position="136"/>
        <end position="141"/>
    </location>
    <ligand>
        <name>S-adenosyl-L-methionine</name>
        <dbReference type="ChEBI" id="CHEBI:59789"/>
    </ligand>
</feature>
<evidence type="ECO:0000255" key="1">
    <source>
        <dbReference type="HAMAP-Rule" id="MF_00605"/>
    </source>
</evidence>
<gene>
    <name evidence="1" type="primary">trmD</name>
    <name type="ordered locus">PputGB1_1069</name>
</gene>
<keyword id="KW-0963">Cytoplasm</keyword>
<keyword id="KW-0489">Methyltransferase</keyword>
<keyword id="KW-0949">S-adenosyl-L-methionine</keyword>
<keyword id="KW-0808">Transferase</keyword>
<keyword id="KW-0819">tRNA processing</keyword>
<sequence>MGNLCVDVITLFPEMFSAITEYGITSRAVKQGLLQVTCWNPRDYTTDRHHTVDDRPFGGGPGMVMKIKPLEDALVSARQATGAAAKVIYLSPQGRKLTQQAVKGLAEQESLILIAGRYEGIDERFIEAHVDEEWSIGDYVLSGGELPAMVLIDAVTRLLPGALGHVDSAEEDSFTDGLLDCPHYTRPEVYADQRVPDVLLSGNHAHIRRWRMKQSLGRTFERRADLLESRSLSGEEKKLLEEYLRERDDS</sequence>
<comment type="function">
    <text evidence="1">Specifically methylates guanosine-37 in various tRNAs.</text>
</comment>
<comment type="catalytic activity">
    <reaction evidence="1">
        <text>guanosine(37) in tRNA + S-adenosyl-L-methionine = N(1)-methylguanosine(37) in tRNA + S-adenosyl-L-homocysteine + H(+)</text>
        <dbReference type="Rhea" id="RHEA:36899"/>
        <dbReference type="Rhea" id="RHEA-COMP:10145"/>
        <dbReference type="Rhea" id="RHEA-COMP:10147"/>
        <dbReference type="ChEBI" id="CHEBI:15378"/>
        <dbReference type="ChEBI" id="CHEBI:57856"/>
        <dbReference type="ChEBI" id="CHEBI:59789"/>
        <dbReference type="ChEBI" id="CHEBI:73542"/>
        <dbReference type="ChEBI" id="CHEBI:74269"/>
        <dbReference type="EC" id="2.1.1.228"/>
    </reaction>
</comment>
<comment type="subunit">
    <text evidence="1">Homodimer.</text>
</comment>
<comment type="subcellular location">
    <subcellularLocation>
        <location evidence="1">Cytoplasm</location>
    </subcellularLocation>
</comment>
<comment type="similarity">
    <text evidence="1">Belongs to the RNA methyltransferase TrmD family.</text>
</comment>
<dbReference type="EC" id="2.1.1.228" evidence="1"/>
<dbReference type="EMBL" id="CP000926">
    <property type="protein sequence ID" value="ABY96977.1"/>
    <property type="molecule type" value="Genomic_DNA"/>
</dbReference>
<dbReference type="RefSeq" id="WP_012270760.1">
    <property type="nucleotide sequence ID" value="NC_010322.1"/>
</dbReference>
<dbReference type="SMR" id="B0KRI3"/>
<dbReference type="KEGG" id="ppg:PputGB1_1069"/>
<dbReference type="eggNOG" id="COG0336">
    <property type="taxonomic scope" value="Bacteria"/>
</dbReference>
<dbReference type="HOGENOM" id="CLU_047363_0_2_6"/>
<dbReference type="Proteomes" id="UP000002157">
    <property type="component" value="Chromosome"/>
</dbReference>
<dbReference type="GO" id="GO:0005829">
    <property type="term" value="C:cytosol"/>
    <property type="evidence" value="ECO:0007669"/>
    <property type="project" value="TreeGrafter"/>
</dbReference>
<dbReference type="GO" id="GO:0052906">
    <property type="term" value="F:tRNA (guanine(37)-N1)-methyltransferase activity"/>
    <property type="evidence" value="ECO:0007669"/>
    <property type="project" value="UniProtKB-UniRule"/>
</dbReference>
<dbReference type="GO" id="GO:0002939">
    <property type="term" value="P:tRNA N1-guanine methylation"/>
    <property type="evidence" value="ECO:0007669"/>
    <property type="project" value="TreeGrafter"/>
</dbReference>
<dbReference type="CDD" id="cd18080">
    <property type="entry name" value="TrmD-like"/>
    <property type="match status" value="1"/>
</dbReference>
<dbReference type="FunFam" id="1.10.1270.20:FF:000001">
    <property type="entry name" value="tRNA (guanine-N(1)-)-methyltransferase"/>
    <property type="match status" value="1"/>
</dbReference>
<dbReference type="FunFam" id="3.40.1280.10:FF:000001">
    <property type="entry name" value="tRNA (guanine-N(1)-)-methyltransferase"/>
    <property type="match status" value="1"/>
</dbReference>
<dbReference type="Gene3D" id="3.40.1280.10">
    <property type="match status" value="1"/>
</dbReference>
<dbReference type="Gene3D" id="1.10.1270.20">
    <property type="entry name" value="tRNA(m1g37)methyltransferase, domain 2"/>
    <property type="match status" value="1"/>
</dbReference>
<dbReference type="HAMAP" id="MF_00605">
    <property type="entry name" value="TrmD"/>
    <property type="match status" value="1"/>
</dbReference>
<dbReference type="InterPro" id="IPR029028">
    <property type="entry name" value="Alpha/beta_knot_MTases"/>
</dbReference>
<dbReference type="InterPro" id="IPR023148">
    <property type="entry name" value="tRNA_m1G_MeTrfase_C_sf"/>
</dbReference>
<dbReference type="InterPro" id="IPR002649">
    <property type="entry name" value="tRNA_m1G_MeTrfase_TrmD"/>
</dbReference>
<dbReference type="InterPro" id="IPR029026">
    <property type="entry name" value="tRNA_m1G_MTases_N"/>
</dbReference>
<dbReference type="InterPro" id="IPR016009">
    <property type="entry name" value="tRNA_MeTrfase_TRMD/TRM10"/>
</dbReference>
<dbReference type="NCBIfam" id="NF000648">
    <property type="entry name" value="PRK00026.1"/>
    <property type="match status" value="1"/>
</dbReference>
<dbReference type="NCBIfam" id="TIGR00088">
    <property type="entry name" value="trmD"/>
    <property type="match status" value="1"/>
</dbReference>
<dbReference type="PANTHER" id="PTHR46417">
    <property type="entry name" value="TRNA (GUANINE-N(1)-)-METHYLTRANSFERASE"/>
    <property type="match status" value="1"/>
</dbReference>
<dbReference type="PANTHER" id="PTHR46417:SF1">
    <property type="entry name" value="TRNA (GUANINE-N(1)-)-METHYLTRANSFERASE"/>
    <property type="match status" value="1"/>
</dbReference>
<dbReference type="Pfam" id="PF01746">
    <property type="entry name" value="tRNA_m1G_MT"/>
    <property type="match status" value="1"/>
</dbReference>
<dbReference type="PIRSF" id="PIRSF000386">
    <property type="entry name" value="tRNA_mtase"/>
    <property type="match status" value="1"/>
</dbReference>
<dbReference type="SUPFAM" id="SSF75217">
    <property type="entry name" value="alpha/beta knot"/>
    <property type="match status" value="1"/>
</dbReference>
<reference key="1">
    <citation type="submission" date="2008-01" db="EMBL/GenBank/DDBJ databases">
        <title>Complete sequence of Pseudomonas putida GB-1.</title>
        <authorList>
            <consortium name="US DOE Joint Genome Institute"/>
            <person name="Copeland A."/>
            <person name="Lucas S."/>
            <person name="Lapidus A."/>
            <person name="Barry K."/>
            <person name="Glavina del Rio T."/>
            <person name="Dalin E."/>
            <person name="Tice H."/>
            <person name="Pitluck S."/>
            <person name="Bruce D."/>
            <person name="Goodwin L."/>
            <person name="Chertkov O."/>
            <person name="Brettin T."/>
            <person name="Detter J.C."/>
            <person name="Han C."/>
            <person name="Kuske C.R."/>
            <person name="Schmutz J."/>
            <person name="Larimer F."/>
            <person name="Land M."/>
            <person name="Hauser L."/>
            <person name="Kyrpides N."/>
            <person name="Kim E."/>
            <person name="McCarthy J.K."/>
            <person name="Richardson P."/>
        </authorList>
    </citation>
    <scope>NUCLEOTIDE SEQUENCE [LARGE SCALE GENOMIC DNA]</scope>
    <source>
        <strain>GB-1</strain>
    </source>
</reference>
<protein>
    <recommendedName>
        <fullName evidence="1">tRNA (guanine-N(1)-)-methyltransferase</fullName>
        <ecNumber evidence="1">2.1.1.228</ecNumber>
    </recommendedName>
    <alternativeName>
        <fullName evidence="1">M1G-methyltransferase</fullName>
    </alternativeName>
    <alternativeName>
        <fullName evidence="1">tRNA [GM37] methyltransferase</fullName>
    </alternativeName>
</protein>
<proteinExistence type="inferred from homology"/>
<accession>B0KRI3</accession>
<name>TRMD_PSEPG</name>